<name>PSCI_PSEAE</name>
<keyword id="KW-1185">Reference proteome</keyword>
<proteinExistence type="evidence at protein level"/>
<accession>Q9I315</accession>
<feature type="chain" id="PRO_0000451078" description="Type III inner-rod protein PscI">
    <location>
        <begin position="1"/>
        <end position="112"/>
    </location>
</feature>
<feature type="mutagenesis site" description="Complete loss of needle assembly." evidence="1">
    <original>L</original>
    <variation>A</variation>
    <location>
        <position position="84"/>
    </location>
</feature>
<feature type="mutagenesis site" description="Complete loss of needle assembly." evidence="1">
    <original>E</original>
    <variation>K</variation>
    <location>
        <position position="91"/>
    </location>
</feature>
<feature type="mutagenesis site" description="Complete loss of needle assembly." evidence="1">
    <original>E</original>
    <variation>K</variation>
    <location>
        <position position="92"/>
    </location>
</feature>
<feature type="mutagenesis site" description="Complete loss of needle assembly." evidence="1">
    <original>V</original>
    <variation>K</variation>
    <location>
        <position position="105"/>
    </location>
</feature>
<feature type="mutagenesis site" description="Complete loss of needle assembly." evidence="1">
    <original>L</original>
    <variation>K</variation>
    <location>
        <position position="108"/>
    </location>
</feature>
<sequence>MDISRMGAQAQITSLEELSGGPAGAAHVAEFERAMGGAGSLGGDLLSELGQIRERFSQAKQELQMELSTPGDDPNSLMQMQWSLMRITMQEELIAKTVGRMSQNVETLMKTQ</sequence>
<organism>
    <name type="scientific">Pseudomonas aeruginosa (strain ATCC 15692 / DSM 22644 / CIP 104116 / JCM 14847 / LMG 12228 / 1C / PRS 101 / PAO1)</name>
    <dbReference type="NCBI Taxonomy" id="208964"/>
    <lineage>
        <taxon>Bacteria</taxon>
        <taxon>Pseudomonadati</taxon>
        <taxon>Pseudomonadota</taxon>
        <taxon>Gammaproteobacteria</taxon>
        <taxon>Pseudomonadales</taxon>
        <taxon>Pseudomonadaceae</taxon>
        <taxon>Pseudomonas</taxon>
    </lineage>
</organism>
<comment type="function">
    <text evidence="1">Component of the type III secretion (T3S) injectisome that translocates effector toxins into host cells, facilitating the establishment and dissemination of infection. Polymerizes into flexible and regularly twisted fibrils and plays an essential role in needle assembly.</text>
</comment>
<comment type="subunit">
    <text evidence="1">Homomultimer (through its C-terminal region).</text>
</comment>
<comment type="disruption phenotype">
    <text evidence="1">Deletion mutants display a reduced cytotoxicity toward macrophages.</text>
</comment>
<comment type="similarity">
    <text evidence="3">Belongs to the YscI/HrpB family.</text>
</comment>
<protein>
    <recommendedName>
        <fullName evidence="2">Type III inner-rod protein PscI</fullName>
    </recommendedName>
</protein>
<evidence type="ECO:0000269" key="1">
    <source>
    </source>
</evidence>
<evidence type="ECO:0000303" key="2">
    <source>
    </source>
</evidence>
<evidence type="ECO:0000305" key="3"/>
<dbReference type="EMBL" id="AE004091">
    <property type="protein sequence ID" value="AAG05111.1"/>
    <property type="molecule type" value="Genomic_DNA"/>
</dbReference>
<dbReference type="PIR" id="B83431">
    <property type="entry name" value="B83431"/>
</dbReference>
<dbReference type="RefSeq" id="NP_250413.1">
    <property type="nucleotide sequence ID" value="NC_002516.2"/>
</dbReference>
<dbReference type="RefSeq" id="WP_010895582.1">
    <property type="nucleotide sequence ID" value="NZ_QZGE01000003.1"/>
</dbReference>
<dbReference type="SMR" id="Q9I315"/>
<dbReference type="STRING" id="208964.PA1722"/>
<dbReference type="PaxDb" id="208964-PA1722"/>
<dbReference type="GeneID" id="879567"/>
<dbReference type="KEGG" id="pae:PA1722"/>
<dbReference type="PATRIC" id="fig|208964.12.peg.1784"/>
<dbReference type="PseudoCAP" id="PA1722"/>
<dbReference type="HOGENOM" id="CLU_171571_0_0_6"/>
<dbReference type="InParanoid" id="Q9I315"/>
<dbReference type="OrthoDB" id="6996420at2"/>
<dbReference type="BioCyc" id="PAER208964:G1FZ6-1753-MONOMER"/>
<dbReference type="Proteomes" id="UP000002438">
    <property type="component" value="Chromosome"/>
</dbReference>
<dbReference type="GO" id="GO:0030254">
    <property type="term" value="P:protein secretion by the type III secretion system"/>
    <property type="evidence" value="ECO:0000317"/>
    <property type="project" value="PseudoCAP"/>
</dbReference>
<dbReference type="InterPro" id="IPR012670">
    <property type="entry name" value="T3SS_YscI/HrpB"/>
</dbReference>
<dbReference type="NCBIfam" id="TIGR02497">
    <property type="entry name" value="yscI_hrpB_dom"/>
    <property type="match status" value="1"/>
</dbReference>
<dbReference type="Pfam" id="PF17001">
    <property type="entry name" value="T3SS_basalb_I"/>
    <property type="match status" value="1"/>
</dbReference>
<gene>
    <name type="primary">pscI</name>
    <name type="ordered locus">PA1722</name>
</gene>
<reference key="1">
    <citation type="journal article" date="2000" name="Nature">
        <title>Complete genome sequence of Pseudomonas aeruginosa PAO1, an opportunistic pathogen.</title>
        <authorList>
            <person name="Stover C.K."/>
            <person name="Pham X.-Q.T."/>
            <person name="Erwin A.L."/>
            <person name="Mizoguchi S.D."/>
            <person name="Warrener P."/>
            <person name="Hickey M.J."/>
            <person name="Brinkman F.S.L."/>
            <person name="Hufnagle W.O."/>
            <person name="Kowalik D.J."/>
            <person name="Lagrou M."/>
            <person name="Garber R.L."/>
            <person name="Goltry L."/>
            <person name="Tolentino E."/>
            <person name="Westbrock-Wadman S."/>
            <person name="Yuan Y."/>
            <person name="Brody L.L."/>
            <person name="Coulter S.N."/>
            <person name="Folger K.R."/>
            <person name="Kas A."/>
            <person name="Larbig K."/>
            <person name="Lim R.M."/>
            <person name="Smith K.A."/>
            <person name="Spencer D.H."/>
            <person name="Wong G.K.-S."/>
            <person name="Wu Z."/>
            <person name="Paulsen I.T."/>
            <person name="Reizer J."/>
            <person name="Saier M.H. Jr."/>
            <person name="Hancock R.E.W."/>
            <person name="Lory S."/>
            <person name="Olson M.V."/>
        </authorList>
    </citation>
    <scope>NUCLEOTIDE SEQUENCE [LARGE SCALE GENOMIC DNA]</scope>
    <source>
        <strain>ATCC 15692 / DSM 22644 / CIP 104116 / JCM 14847 / LMG 12228 / 1C / PRS 101 / PAO1</strain>
    </source>
</reference>
<reference key="2">
    <citation type="journal article" date="2015" name="Mol. Microbiol.">
        <title>PscI is a type III secretion needle anchoring protein with in vitro polymerization capacities.</title>
        <authorList>
            <person name="Monlezun L."/>
            <person name="Liebl D."/>
            <person name="Fenel D."/>
            <person name="Grandjean T."/>
            <person name="Berry A."/>
            <person name="Schoehn G."/>
            <person name="Dessein R."/>
            <person name="Faudry E."/>
            <person name="Attree I."/>
        </authorList>
    </citation>
    <scope>FUNCTION</scope>
    <scope>SUBUNIT</scope>
    <scope>DISRUPTION PHENOTYPE</scope>
    <scope>MUTAGENESIS OF LEU-84; GLU-91; GLU-92; VAL-105 AND LEU-108</scope>
    <source>
        <strain>CHA</strain>
    </source>
</reference>